<comment type="function">
    <text evidence="1 2">Oxygenase that can act as both a histone lysine demethylase and a ribosomal histidine hydroxylase (By similarity). Specifically demethylates 'Lys-4' (H3K4me) and 'Lys-36' (H3K36me) of histone H3, thereby playing a central role in histone code. Preferentially demethylates trimethylated H3 'Lys-4' (H3K4me3) and monomethylated H3 'Lys-4' (H3K4me1) residues, while it has weaker activity for dimethylated H3 'Lys-36' (H3K36me2). Acts as a regulator of osteoblast differentiation via its interaction with SP7/OSX by demethylating H3K4me and H3K36me, thereby inhibiting SP7/OSX-mediated promoter activation. Also catalyzes demethylation of non-histone proteins, such as CGAS: demethylation of monomethylated CGAS promotes interaction between CGAS and PARP1, followed by PARP1 inactivation (By similarity). Also catalyzes the hydroxylation of 60S ribosomal protein L8 on 'His-216', thereby playing a role in ribosome biogenesis. Participates in MYC-induced transcriptional activation (By similarity).</text>
</comment>
<comment type="catalytic activity">
    <reaction evidence="2">
        <text>N(6),N(6)-dimethyl-L-lysyl(36)-[histone H3] + 2 2-oxoglutarate + 2 O2 = L-lysyl(36)-[histone H3] + 2 formaldehyde + 2 succinate + 2 CO2</text>
        <dbReference type="Rhea" id="RHEA:42032"/>
        <dbReference type="Rhea" id="RHEA-COMP:9785"/>
        <dbReference type="Rhea" id="RHEA-COMP:9787"/>
        <dbReference type="ChEBI" id="CHEBI:15379"/>
        <dbReference type="ChEBI" id="CHEBI:16526"/>
        <dbReference type="ChEBI" id="CHEBI:16810"/>
        <dbReference type="ChEBI" id="CHEBI:16842"/>
        <dbReference type="ChEBI" id="CHEBI:29969"/>
        <dbReference type="ChEBI" id="CHEBI:30031"/>
        <dbReference type="ChEBI" id="CHEBI:61976"/>
        <dbReference type="EC" id="1.14.11.27"/>
    </reaction>
    <physiologicalReaction direction="left-to-right" evidence="2">
        <dbReference type="Rhea" id="RHEA:42033"/>
    </physiologicalReaction>
</comment>
<comment type="catalytic activity">
    <reaction evidence="1">
        <text>N(6)-methyl-L-lysyl-[protein] + 2-oxoglutarate + O2 = L-lysyl-[protein] + formaldehyde + succinate + CO2</text>
        <dbReference type="Rhea" id="RHEA:60924"/>
        <dbReference type="Rhea" id="RHEA-COMP:9752"/>
        <dbReference type="Rhea" id="RHEA-COMP:13053"/>
        <dbReference type="ChEBI" id="CHEBI:15379"/>
        <dbReference type="ChEBI" id="CHEBI:16526"/>
        <dbReference type="ChEBI" id="CHEBI:16810"/>
        <dbReference type="ChEBI" id="CHEBI:16842"/>
        <dbReference type="ChEBI" id="CHEBI:29969"/>
        <dbReference type="ChEBI" id="CHEBI:30031"/>
        <dbReference type="ChEBI" id="CHEBI:61929"/>
    </reaction>
    <physiologicalReaction direction="left-to-right" evidence="1">
        <dbReference type="Rhea" id="RHEA:60925"/>
    </physiologicalReaction>
</comment>
<comment type="catalytic activity">
    <reaction evidence="1">
        <text>L-histidyl-[protein] + 2-oxoglutarate + O2 = (3S)-3-hydroxy-L-histidyl-[protein] + succinate + CO2</text>
        <dbReference type="Rhea" id="RHEA:54256"/>
        <dbReference type="Rhea" id="RHEA-COMP:9745"/>
        <dbReference type="Rhea" id="RHEA-COMP:13840"/>
        <dbReference type="ChEBI" id="CHEBI:15379"/>
        <dbReference type="ChEBI" id="CHEBI:16526"/>
        <dbReference type="ChEBI" id="CHEBI:16810"/>
        <dbReference type="ChEBI" id="CHEBI:29979"/>
        <dbReference type="ChEBI" id="CHEBI:30031"/>
        <dbReference type="ChEBI" id="CHEBI:138021"/>
        <dbReference type="EC" id="1.14.11.79"/>
    </reaction>
    <physiologicalReaction direction="left-to-right" evidence="1">
        <dbReference type="Rhea" id="RHEA:54257"/>
    </physiologicalReaction>
</comment>
<comment type="cofactor">
    <cofactor evidence="2">
        <name>Fe(2+)</name>
        <dbReference type="ChEBI" id="CHEBI:29033"/>
    </cofactor>
    <text evidence="2">Binds 1 Fe(2+) ion per subunit.</text>
</comment>
<comment type="subunit">
    <text evidence="1 2">Interacts with SP7/OSX; the interaction is direct (By similarity). Interacts with MYC. Interacts with PHF19; leading to its recruitment to H3K36me3 sites (By similarity).</text>
</comment>
<comment type="subcellular location">
    <subcellularLocation>
        <location evidence="1">Nucleus</location>
        <location evidence="1">Nucleolus</location>
    </subcellularLocation>
    <subcellularLocation>
        <location evidence="1">Nucleus</location>
        <location evidence="1">Nucleoplasm</location>
    </subcellularLocation>
    <text evidence="1">Granular part of nucleoli. Nucleoplasm, nucleoplasmic foci, some of them associated with nucleoli.</text>
</comment>
<comment type="similarity">
    <text evidence="5">Belongs to the ROX family. NO66 subfamily.</text>
</comment>
<organism>
    <name type="scientific">Rattus norvegicus</name>
    <name type="common">Rat</name>
    <dbReference type="NCBI Taxonomy" id="10116"/>
    <lineage>
        <taxon>Eukaryota</taxon>
        <taxon>Metazoa</taxon>
        <taxon>Chordata</taxon>
        <taxon>Craniata</taxon>
        <taxon>Vertebrata</taxon>
        <taxon>Euteleostomi</taxon>
        <taxon>Mammalia</taxon>
        <taxon>Eutheria</taxon>
        <taxon>Euarchontoglires</taxon>
        <taxon>Glires</taxon>
        <taxon>Rodentia</taxon>
        <taxon>Myomorpha</taxon>
        <taxon>Muroidea</taxon>
        <taxon>Muridae</taxon>
        <taxon>Murinae</taxon>
        <taxon>Rattus</taxon>
    </lineage>
</organism>
<gene>
    <name evidence="6" type="primary">Riox1</name>
    <name type="synonym">Mapjd</name>
    <name type="synonym">No66</name>
</gene>
<accession>D3ZU57</accession>
<name>RIOX1_RAT</name>
<protein>
    <recommendedName>
        <fullName evidence="6">Ribosomal oxygenase 1</fullName>
    </recommendedName>
    <alternativeName>
        <fullName>Bifunctional lysine-specific demethylase and histidyl-hydroxylase NO66</fullName>
        <ecNumber evidence="2">1.14.11.27</ecNumber>
        <ecNumber evidence="2">1.14.11.79</ecNumber>
    </alternativeName>
    <alternativeName>
        <fullName>Histone lysine demethylase NO66</fullName>
    </alternativeName>
</protein>
<reference key="1">
    <citation type="submission" date="2005-07" db="EMBL/GenBank/DDBJ databases">
        <authorList>
            <person name="Mural R.J."/>
            <person name="Adams M.D."/>
            <person name="Myers E.W."/>
            <person name="Smith H.O."/>
            <person name="Venter J.C."/>
        </authorList>
    </citation>
    <scope>NUCLEOTIDE SEQUENCE [LARGE SCALE GENOMIC DNA]</scope>
</reference>
<reference key="2">
    <citation type="journal article" date="2012" name="Nat. Commun.">
        <title>Quantitative maps of protein phosphorylation sites across 14 different rat organs and tissues.</title>
        <authorList>
            <person name="Lundby A."/>
            <person name="Secher A."/>
            <person name="Lage K."/>
            <person name="Nordsborg N.B."/>
            <person name="Dmytriyev A."/>
            <person name="Lundby C."/>
            <person name="Olsen J.V."/>
        </authorList>
    </citation>
    <scope>PHOSPHORYLATION [LARGE SCALE ANALYSIS] AT SER-62 AND SER-65</scope>
    <scope>IDENTIFICATION BY MASS SPECTROMETRY [LARGE SCALE ANALYSIS]</scope>
</reference>
<sequence>MDELPNGNGAAPLKRGRGRRRRQPQPRGASVLALPLRPRKVRRHRKSAASRVAALRARALLSEDSDSNVESVRGKRERPAELPEASRSAEPRPVPVRPRPASATLPRRVEGRAALSRNLGKPAPLPGSHVDDPERPWDSPLQQVLAELNGIPSSRRRAARLFEWLLAPLPPDHFYRRLWEREAVLVRRQDHSYYEGLFSTSDLDWMLRYEDVHFGQHLDAARYIDGRRETLNPPGRALPAAAWSLYQAGCSLRLLCPQAFSPTVWQFLAVLQEQFGSMAGSNVYLTPPNSQGFAPHYDDIEAFVLQLEGRKLWRVYRPRDPSEELALTSSPNFSQEDLGEPVLQTVLEPGDLLYFPRGFIHQAECQDGVHSLHLTLSTYQRNTWGDFLEAVLPLAMQAAIEENVEFRRGLPRDFMDYMGAQHSDSKDPRRTAFMEKVRVLVARLGHFAPVDAVADQRAKDFIHDSLPPVLTDRERALSVHGLPIRWEAGEPVNVGAQLTTETQVHMLQDGIARLVGEGGRLFLYYTVENSRVYHLEEPKCLEIYPQQADAMELLLRSYPEFVRVGDLPCDSVEDQLSLATMLYDKGLLLTKTPLVLS</sequence>
<keyword id="KW-0007">Acetylation</keyword>
<keyword id="KW-0156">Chromatin regulator</keyword>
<keyword id="KW-0223">Dioxygenase</keyword>
<keyword id="KW-0408">Iron</keyword>
<keyword id="KW-0479">Metal-binding</keyword>
<keyword id="KW-0539">Nucleus</keyword>
<keyword id="KW-0560">Oxidoreductase</keyword>
<keyword id="KW-0597">Phosphoprotein</keyword>
<keyword id="KW-1185">Reference proteome</keyword>
<keyword id="KW-0678">Repressor</keyword>
<keyword id="KW-0804">Transcription</keyword>
<keyword id="KW-0805">Transcription regulation</keyword>
<evidence type="ECO:0000250" key="1">
    <source>
        <dbReference type="UniProtKB" id="Q9H6W3"/>
    </source>
</evidence>
<evidence type="ECO:0000250" key="2">
    <source>
        <dbReference type="UniProtKB" id="Q9JJF3"/>
    </source>
</evidence>
<evidence type="ECO:0000255" key="3">
    <source>
        <dbReference type="PROSITE-ProRule" id="PRU00538"/>
    </source>
</evidence>
<evidence type="ECO:0000256" key="4">
    <source>
        <dbReference type="SAM" id="MobiDB-lite"/>
    </source>
</evidence>
<evidence type="ECO:0000305" key="5"/>
<evidence type="ECO:0000312" key="6">
    <source>
        <dbReference type="RGD" id="1307704"/>
    </source>
</evidence>
<evidence type="ECO:0007744" key="7">
    <source>
    </source>
</evidence>
<dbReference type="EC" id="1.14.11.27" evidence="2"/>
<dbReference type="EC" id="1.14.11.79" evidence="2"/>
<dbReference type="EMBL" id="CH473982">
    <property type="protein sequence ID" value="EDL81467.1"/>
    <property type="molecule type" value="Genomic_DNA"/>
</dbReference>
<dbReference type="RefSeq" id="NP_001101510.1">
    <property type="nucleotide sequence ID" value="NM_001108040.1"/>
</dbReference>
<dbReference type="SMR" id="D3ZU57"/>
<dbReference type="FunCoup" id="D3ZU57">
    <property type="interactions" value="2525"/>
</dbReference>
<dbReference type="IntAct" id="D3ZU57">
    <property type="interactions" value="1"/>
</dbReference>
<dbReference type="MINT" id="D3ZU57"/>
<dbReference type="STRING" id="10116.ENSRNOP00000013431"/>
<dbReference type="iPTMnet" id="D3ZU57"/>
<dbReference type="PhosphoSitePlus" id="D3ZU57"/>
<dbReference type="jPOST" id="D3ZU57"/>
<dbReference type="PaxDb" id="10116-ENSRNOP00000013431"/>
<dbReference type="PeptideAtlas" id="D3ZU57"/>
<dbReference type="Ensembl" id="ENSRNOT00000013431.6">
    <property type="protein sequence ID" value="ENSRNOP00000013431.2"/>
    <property type="gene ID" value="ENSRNOG00000010126.6"/>
</dbReference>
<dbReference type="GeneID" id="314300"/>
<dbReference type="KEGG" id="rno:314300"/>
<dbReference type="UCSC" id="RGD:1307704">
    <property type="organism name" value="rat"/>
</dbReference>
<dbReference type="AGR" id="RGD:1307704"/>
<dbReference type="CTD" id="79697"/>
<dbReference type="RGD" id="1307704">
    <property type="gene designation" value="Riox1"/>
</dbReference>
<dbReference type="eggNOG" id="KOG3706">
    <property type="taxonomic scope" value="Eukaryota"/>
</dbReference>
<dbReference type="GeneTree" id="ENSGT00390000000083"/>
<dbReference type="HOGENOM" id="CLU_013645_4_1_1"/>
<dbReference type="InParanoid" id="D3ZU57"/>
<dbReference type="OMA" id="YLEYMGV"/>
<dbReference type="OrthoDB" id="425950at2759"/>
<dbReference type="PhylomeDB" id="D3ZU57"/>
<dbReference type="TreeFam" id="TF318659"/>
<dbReference type="Reactome" id="R-RNO-9629569">
    <property type="pathway name" value="Protein hydroxylation"/>
</dbReference>
<dbReference type="PRO" id="PR:D3ZU57"/>
<dbReference type="Proteomes" id="UP000002494">
    <property type="component" value="Chromosome 6"/>
</dbReference>
<dbReference type="Proteomes" id="UP000234681">
    <property type="component" value="Chromosome 6"/>
</dbReference>
<dbReference type="Bgee" id="ENSRNOG00000010126">
    <property type="expression patterns" value="Expressed in thymus and 19 other cell types or tissues"/>
</dbReference>
<dbReference type="GO" id="GO:0005730">
    <property type="term" value="C:nucleolus"/>
    <property type="evidence" value="ECO:0000266"/>
    <property type="project" value="RGD"/>
</dbReference>
<dbReference type="GO" id="GO:0005654">
    <property type="term" value="C:nucleoplasm"/>
    <property type="evidence" value="ECO:0007669"/>
    <property type="project" value="UniProtKB-SubCell"/>
</dbReference>
<dbReference type="GO" id="GO:0005634">
    <property type="term" value="C:nucleus"/>
    <property type="evidence" value="ECO:0000266"/>
    <property type="project" value="RGD"/>
</dbReference>
<dbReference type="GO" id="GO:0016706">
    <property type="term" value="F:2-oxoglutarate-dependent dioxygenase activity"/>
    <property type="evidence" value="ECO:0000250"/>
    <property type="project" value="UniProtKB"/>
</dbReference>
<dbReference type="GO" id="GO:0051864">
    <property type="term" value="F:histone H3K36 demethylase activity"/>
    <property type="evidence" value="ECO:0000266"/>
    <property type="project" value="RGD"/>
</dbReference>
<dbReference type="GO" id="GO:0140680">
    <property type="term" value="F:histone H3K36me/H3K36me2 demethylase activity"/>
    <property type="evidence" value="ECO:0007669"/>
    <property type="project" value="UniProtKB-EC"/>
</dbReference>
<dbReference type="GO" id="GO:0032453">
    <property type="term" value="F:histone H3K4 demethylase activity"/>
    <property type="evidence" value="ECO:0000318"/>
    <property type="project" value="GO_Central"/>
</dbReference>
<dbReference type="GO" id="GO:0034647">
    <property type="term" value="F:histone H3K4me/H3K4me2/H3K4me3 demethylase activity"/>
    <property type="evidence" value="ECO:0000266"/>
    <property type="project" value="RGD"/>
</dbReference>
<dbReference type="GO" id="GO:0005506">
    <property type="term" value="F:iron ion binding"/>
    <property type="evidence" value="ECO:0000266"/>
    <property type="project" value="RGD"/>
</dbReference>
<dbReference type="GO" id="GO:0036139">
    <property type="term" value="F:peptidyl-histidine dioxygenase activity"/>
    <property type="evidence" value="ECO:0000250"/>
    <property type="project" value="UniProtKB"/>
</dbReference>
<dbReference type="GO" id="GO:0140457">
    <property type="term" value="F:protein demethylase activity"/>
    <property type="evidence" value="ECO:0000250"/>
    <property type="project" value="UniProtKB"/>
</dbReference>
<dbReference type="GO" id="GO:0045892">
    <property type="term" value="P:negative regulation of DNA-templated transcription"/>
    <property type="evidence" value="ECO:0000266"/>
    <property type="project" value="RGD"/>
</dbReference>
<dbReference type="GO" id="GO:0045668">
    <property type="term" value="P:negative regulation of osteoblast differentiation"/>
    <property type="evidence" value="ECO:0000266"/>
    <property type="project" value="RGD"/>
</dbReference>
<dbReference type="FunFam" id="2.60.120.650:FF:000013">
    <property type="entry name" value="Ribosomal oxygenase 1"/>
    <property type="match status" value="1"/>
</dbReference>
<dbReference type="FunFam" id="1.10.10.1500:FF:000001">
    <property type="entry name" value="ribosomal oxygenase 1 isoform X1"/>
    <property type="match status" value="1"/>
</dbReference>
<dbReference type="FunFam" id="3.90.930.40:FF:000001">
    <property type="entry name" value="ribosomal oxygenase 1 isoform X1"/>
    <property type="match status" value="1"/>
</dbReference>
<dbReference type="Gene3D" id="3.90.930.40">
    <property type="match status" value="1"/>
</dbReference>
<dbReference type="Gene3D" id="2.60.120.650">
    <property type="entry name" value="Cupin"/>
    <property type="match status" value="1"/>
</dbReference>
<dbReference type="Gene3D" id="1.10.10.1500">
    <property type="entry name" value="JmjC domain-containing ribosomal oxygenase (ROX), dimer domain"/>
    <property type="match status" value="1"/>
</dbReference>
<dbReference type="InterPro" id="IPR003347">
    <property type="entry name" value="JmjC_dom"/>
</dbReference>
<dbReference type="InterPro" id="IPR039994">
    <property type="entry name" value="NO66-like"/>
</dbReference>
<dbReference type="InterPro" id="IPR049043">
    <property type="entry name" value="RIOX1/NO66-like_C_WH"/>
</dbReference>
<dbReference type="PANTHER" id="PTHR13096">
    <property type="entry name" value="MINA53 MYC INDUCED NUCLEAR ANTIGEN"/>
    <property type="match status" value="1"/>
</dbReference>
<dbReference type="PANTHER" id="PTHR13096:SF8">
    <property type="entry name" value="RIBOSOMAL OXYGENASE 1"/>
    <property type="match status" value="1"/>
</dbReference>
<dbReference type="Pfam" id="PF08007">
    <property type="entry name" value="JmjC_2"/>
    <property type="match status" value="1"/>
</dbReference>
<dbReference type="Pfam" id="PF21233">
    <property type="entry name" value="RIOX1_C_WH"/>
    <property type="match status" value="1"/>
</dbReference>
<dbReference type="SMART" id="SM00558">
    <property type="entry name" value="JmjC"/>
    <property type="match status" value="1"/>
</dbReference>
<dbReference type="SUPFAM" id="SSF51197">
    <property type="entry name" value="Clavaminate synthase-like"/>
    <property type="match status" value="1"/>
</dbReference>
<dbReference type="PROSITE" id="PS51184">
    <property type="entry name" value="JMJC"/>
    <property type="match status" value="1"/>
</dbReference>
<proteinExistence type="evidence at protein level"/>
<feature type="chain" id="PRO_0000417667" description="Ribosomal oxygenase 1">
    <location>
        <begin position="1"/>
        <end position="597"/>
    </location>
</feature>
<feature type="domain" description="JmjC" evidence="3">
    <location>
        <begin position="250"/>
        <end position="395"/>
    </location>
</feature>
<feature type="region of interest" description="Disordered" evidence="4">
    <location>
        <begin position="1"/>
        <end position="138"/>
    </location>
</feature>
<feature type="compositionally biased region" description="Basic residues" evidence="4">
    <location>
        <begin position="14"/>
        <end position="24"/>
    </location>
</feature>
<feature type="compositionally biased region" description="Basic residues" evidence="4">
    <location>
        <begin position="37"/>
        <end position="48"/>
    </location>
</feature>
<feature type="compositionally biased region" description="Low complexity" evidence="4">
    <location>
        <begin position="49"/>
        <end position="62"/>
    </location>
</feature>
<feature type="compositionally biased region" description="Basic and acidic residues" evidence="4">
    <location>
        <begin position="72"/>
        <end position="81"/>
    </location>
</feature>
<feature type="binding site" evidence="3">
    <location>
        <position position="296"/>
    </location>
    <ligand>
        <name>Fe cation</name>
        <dbReference type="ChEBI" id="CHEBI:24875"/>
        <note>catalytic</note>
    </ligand>
</feature>
<feature type="binding site" evidence="3">
    <location>
        <position position="298"/>
    </location>
    <ligand>
        <name>Fe cation</name>
        <dbReference type="ChEBI" id="CHEBI:24875"/>
        <note>catalytic</note>
    </ligand>
</feature>
<feature type="binding site" evidence="3">
    <location>
        <position position="361"/>
    </location>
    <ligand>
        <name>Fe cation</name>
        <dbReference type="ChEBI" id="CHEBI:24875"/>
        <note>catalytic</note>
    </ligand>
</feature>
<feature type="modified residue" description="N-acetylmethionine" evidence="1">
    <location>
        <position position="1"/>
    </location>
</feature>
<feature type="modified residue" description="Phosphoserine" evidence="7">
    <location>
        <position position="62"/>
    </location>
</feature>
<feature type="modified residue" description="Phosphoserine" evidence="7">
    <location>
        <position position="65"/>
    </location>
</feature>
<feature type="modified residue" description="Phosphoserine" evidence="1">
    <location>
        <position position="86"/>
    </location>
</feature>